<reference key="1">
    <citation type="journal article" date="1998" name="Insect Mol. Biol.">
        <title>The heat shock 70 gene family in the Mediterranean fruit fly Ceratitis capitata.</title>
        <authorList>
            <person name="Papadimitriou E."/>
            <person name="Kritikou D."/>
            <person name="Mavroidis M."/>
            <person name="Zacharopoulou A."/>
            <person name="Mintzas A.C."/>
        </authorList>
    </citation>
    <scope>NUCLEOTIDE SEQUENCE [GENOMIC DNA]</scope>
</reference>
<sequence length="638" mass="70068">MVAIGIDLGTTYSCFGVFQHGKVEIIANDQGNRTTPSYVAFTDSERLIGDAAKNQVAMNPKNTVFDAKRLIGRKYDDPKIMEDVKHWPFKVVSDGGKPKISVEYKEENKQFAPEEISSMVLTKMKETAEVILGTTVTDAVITVPAYFNDSQRQATKDAGRIAGLNVLRIINEPTAAALAYGLDKNLKGERNVLIFDLGGGTFDVSILTIDEGSLFEVRATAGDTHLGEDFDNRLVSHLAEEFKRKYKKDLRSNPRALRRLRTAAERAKRTLSSSTEATIEIDALFEGIDLYTKVSRARFEELCADLFRQTLEPVEKALNDAKMDKNQIHVYVLVGGSTRIPKVQRLLQSFFCGKSLNLSINPDEAVAYGAAVQAAILSGDKSTEIQDVLLVDVAPLSLGIETAGGVMAKIIERNCRIPCKQTQTFSTYSDNQPGVNIQVYEGERVMTKDNNRLGTFDLSGIPPAPRGVPQIEVTFDVDANGNNLNVSAKEMSSGNAKNITIKNDKGRLSQAEIDRMVNEAGRYAEEDERQRNKIAARNNLESYVLAVKQAWTTLVDKLSEREKSEVTKACDDTIKWLDATRLADKEEYEDKMNTLTKLCTPIMTKLHSGGGAGQGASCGQQAGGFNGGHTGPTVEEVD</sequence>
<proteinExistence type="evidence at transcript level"/>
<protein>
    <recommendedName>
        <fullName>Heat shock protein 70</fullName>
        <shortName>HSP70</shortName>
    </recommendedName>
</protein>
<comment type="induction">
    <text>By heat shock.</text>
</comment>
<comment type="similarity">
    <text evidence="1">Belongs to the heat shock protein 70 family.</text>
</comment>
<keyword id="KW-0067">ATP-binding</keyword>
<keyword id="KW-0547">Nucleotide-binding</keyword>
<keyword id="KW-0346">Stress response</keyword>
<evidence type="ECO:0000305" key="1"/>
<name>HSP70_CERCA</name>
<feature type="chain" id="PRO_0000078343" description="Heat shock protein 70">
    <location>
        <begin position="1"/>
        <end position="638"/>
    </location>
</feature>
<organism>
    <name type="scientific">Ceratitis capitata</name>
    <name type="common">Mediterranean fruit fly</name>
    <name type="synonym">Tephritis capitata</name>
    <dbReference type="NCBI Taxonomy" id="7213"/>
    <lineage>
        <taxon>Eukaryota</taxon>
        <taxon>Metazoa</taxon>
        <taxon>Ecdysozoa</taxon>
        <taxon>Arthropoda</taxon>
        <taxon>Hexapoda</taxon>
        <taxon>Insecta</taxon>
        <taxon>Pterygota</taxon>
        <taxon>Neoptera</taxon>
        <taxon>Endopterygota</taxon>
        <taxon>Diptera</taxon>
        <taxon>Brachycera</taxon>
        <taxon>Muscomorpha</taxon>
        <taxon>Tephritoidea</taxon>
        <taxon>Tephritidae</taxon>
        <taxon>Ceratitis</taxon>
        <taxon>Ceratitis</taxon>
    </lineage>
</organism>
<dbReference type="EMBL" id="Y08955">
    <property type="protein sequence ID" value="CAA70153.1"/>
    <property type="molecule type" value="Genomic_DNA"/>
</dbReference>
<dbReference type="SMR" id="P91902"/>
<dbReference type="OrthoDB" id="2401965at2759"/>
<dbReference type="GO" id="GO:0005524">
    <property type="term" value="F:ATP binding"/>
    <property type="evidence" value="ECO:0007669"/>
    <property type="project" value="UniProtKB-KW"/>
</dbReference>
<dbReference type="GO" id="GO:0140662">
    <property type="term" value="F:ATP-dependent protein folding chaperone"/>
    <property type="evidence" value="ECO:0007669"/>
    <property type="project" value="InterPro"/>
</dbReference>
<dbReference type="CDD" id="cd10233">
    <property type="entry name" value="ASKHA_NBD_HSP70_HSPA1"/>
    <property type="match status" value="1"/>
</dbReference>
<dbReference type="FunFam" id="2.60.34.10:FF:000002">
    <property type="entry name" value="Heat shock 70 kDa"/>
    <property type="match status" value="1"/>
</dbReference>
<dbReference type="FunFam" id="3.90.640.10:FF:000058">
    <property type="entry name" value="Heat shock 70 kDa protein"/>
    <property type="match status" value="1"/>
</dbReference>
<dbReference type="FunFam" id="3.30.30.30:FF:000001">
    <property type="entry name" value="heat shock 70 kDa protein-like"/>
    <property type="match status" value="1"/>
</dbReference>
<dbReference type="FunFam" id="1.20.1270.10:FF:000024">
    <property type="entry name" value="Heat shock protein 70"/>
    <property type="match status" value="1"/>
</dbReference>
<dbReference type="FunFam" id="3.30.420.40:FF:000026">
    <property type="entry name" value="Heat shock protein 70"/>
    <property type="match status" value="1"/>
</dbReference>
<dbReference type="Gene3D" id="1.20.1270.10">
    <property type="match status" value="1"/>
</dbReference>
<dbReference type="Gene3D" id="3.30.30.30">
    <property type="match status" value="1"/>
</dbReference>
<dbReference type="Gene3D" id="3.30.420.40">
    <property type="match status" value="2"/>
</dbReference>
<dbReference type="Gene3D" id="3.90.640.10">
    <property type="entry name" value="Actin, Chain A, domain 4"/>
    <property type="match status" value="1"/>
</dbReference>
<dbReference type="Gene3D" id="2.60.34.10">
    <property type="entry name" value="Substrate Binding Domain Of DNAk, Chain A, domain 1"/>
    <property type="match status" value="1"/>
</dbReference>
<dbReference type="InterPro" id="IPR043129">
    <property type="entry name" value="ATPase_NBD"/>
</dbReference>
<dbReference type="InterPro" id="IPR018181">
    <property type="entry name" value="Heat_shock_70_CS"/>
</dbReference>
<dbReference type="InterPro" id="IPR029048">
    <property type="entry name" value="HSP70_C_sf"/>
</dbReference>
<dbReference type="InterPro" id="IPR029047">
    <property type="entry name" value="HSP70_peptide-bd_sf"/>
</dbReference>
<dbReference type="InterPro" id="IPR013126">
    <property type="entry name" value="Hsp_70_fam"/>
</dbReference>
<dbReference type="NCBIfam" id="NF001413">
    <property type="entry name" value="PRK00290.1"/>
    <property type="match status" value="1"/>
</dbReference>
<dbReference type="PANTHER" id="PTHR19375">
    <property type="entry name" value="HEAT SHOCK PROTEIN 70KDA"/>
    <property type="match status" value="1"/>
</dbReference>
<dbReference type="Pfam" id="PF00012">
    <property type="entry name" value="HSP70"/>
    <property type="match status" value="1"/>
</dbReference>
<dbReference type="PRINTS" id="PR00301">
    <property type="entry name" value="HEATSHOCK70"/>
</dbReference>
<dbReference type="SUPFAM" id="SSF53067">
    <property type="entry name" value="Actin-like ATPase domain"/>
    <property type="match status" value="2"/>
</dbReference>
<dbReference type="SUPFAM" id="SSF100934">
    <property type="entry name" value="Heat shock protein 70kD (HSP70), C-terminal subdomain"/>
    <property type="match status" value="1"/>
</dbReference>
<dbReference type="SUPFAM" id="SSF100920">
    <property type="entry name" value="Heat shock protein 70kD (HSP70), peptide-binding domain"/>
    <property type="match status" value="1"/>
</dbReference>
<dbReference type="PROSITE" id="PS00297">
    <property type="entry name" value="HSP70_1"/>
    <property type="match status" value="1"/>
</dbReference>
<dbReference type="PROSITE" id="PS00329">
    <property type="entry name" value="HSP70_2"/>
    <property type="match status" value="1"/>
</dbReference>
<dbReference type="PROSITE" id="PS01036">
    <property type="entry name" value="HSP70_3"/>
    <property type="match status" value="1"/>
</dbReference>
<accession>P91902</accession>